<comment type="function">
    <text evidence="1">Component of the ribosome, a large ribonucleoprotein complex responsible for the synthesis of proteins in the cell. The small ribosomal subunit (SSU) binds messenger RNAs (mRNAs) and translates the encoded message by selecting cognate aminoacyl-transfer RNA (tRNA) molecules. The large subunit (LSU) contains the ribosomal catalytic site termed the peptidyl transferase center (PTC), which catalyzes the formation of peptide bonds, thereby polymerizing the amino acids delivered by tRNAs into a polypeptide chain. The nascent polypeptides leave the ribosome through a tunnel in the LSU and interact with protein factors that function in enzymatic processing, targeting, and the membrane insertion of nascent chains at the exit of the ribosomal tunnel.</text>
</comment>
<comment type="subunit">
    <text evidence="1">Component of the large ribosomal subunit (LSU). Mature yeast ribosomes consist of a small (40S) and a large (60S) subunit. The 40S small subunit contains 1 molecule of ribosomal RNA (18S rRNA) and at least 33 different proteins. The large 60S subunit contains 3 rRNA molecules (25S, 5.8S and 5S rRNA) and at least 46 different proteins.</text>
</comment>
<comment type="subcellular location">
    <subcellularLocation>
        <location evidence="3">Cytoplasm</location>
    </subcellularLocation>
    <subcellularLocation>
        <location evidence="3">Nucleus</location>
    </subcellularLocation>
    <subcellularLocation>
        <location evidence="3">Nucleus</location>
        <location evidence="3">Nucleolus</location>
    </subcellularLocation>
</comment>
<comment type="miscellaneous">
    <text>There are 2 genes for uL15 in S.pombe.</text>
</comment>
<comment type="similarity">
    <text evidence="5">Belongs to the universal ribosomal protein uL15 family.</text>
</comment>
<reference key="1">
    <citation type="submission" date="1994-09" db="EMBL/GenBank/DDBJ databases">
        <authorList>
            <person name="Witt I."/>
            <person name="Kwart M."/>
            <person name="Kaeufer N.F."/>
            <person name="Gross T."/>
        </authorList>
    </citation>
    <scope>NUCLEOTIDE SEQUENCE [GENOMIC DNA]</scope>
    <source>
        <strain>972 / ATCC 24843</strain>
    </source>
</reference>
<reference key="2">
    <citation type="journal article" date="2002" name="Nature">
        <title>The genome sequence of Schizosaccharomyces pombe.</title>
        <authorList>
            <person name="Wood V."/>
            <person name="Gwilliam R."/>
            <person name="Rajandream M.A."/>
            <person name="Lyne M.H."/>
            <person name="Lyne R."/>
            <person name="Stewart A."/>
            <person name="Sgouros J.G."/>
            <person name="Peat N."/>
            <person name="Hayles J."/>
            <person name="Baker S.G."/>
            <person name="Basham D."/>
            <person name="Bowman S."/>
            <person name="Brooks K."/>
            <person name="Brown D."/>
            <person name="Brown S."/>
            <person name="Chillingworth T."/>
            <person name="Churcher C.M."/>
            <person name="Collins M."/>
            <person name="Connor R."/>
            <person name="Cronin A."/>
            <person name="Davis P."/>
            <person name="Feltwell T."/>
            <person name="Fraser A."/>
            <person name="Gentles S."/>
            <person name="Goble A."/>
            <person name="Hamlin N."/>
            <person name="Harris D.E."/>
            <person name="Hidalgo J."/>
            <person name="Hodgson G."/>
            <person name="Holroyd S."/>
            <person name="Hornsby T."/>
            <person name="Howarth S."/>
            <person name="Huckle E.J."/>
            <person name="Hunt S."/>
            <person name="Jagels K."/>
            <person name="James K.D."/>
            <person name="Jones L."/>
            <person name="Jones M."/>
            <person name="Leather S."/>
            <person name="McDonald S."/>
            <person name="McLean J."/>
            <person name="Mooney P."/>
            <person name="Moule S."/>
            <person name="Mungall K.L."/>
            <person name="Murphy L.D."/>
            <person name="Niblett D."/>
            <person name="Odell C."/>
            <person name="Oliver K."/>
            <person name="O'Neil S."/>
            <person name="Pearson D."/>
            <person name="Quail M.A."/>
            <person name="Rabbinowitsch E."/>
            <person name="Rutherford K.M."/>
            <person name="Rutter S."/>
            <person name="Saunders D."/>
            <person name="Seeger K."/>
            <person name="Sharp S."/>
            <person name="Skelton J."/>
            <person name="Simmonds M.N."/>
            <person name="Squares R."/>
            <person name="Squares S."/>
            <person name="Stevens K."/>
            <person name="Taylor K."/>
            <person name="Taylor R.G."/>
            <person name="Tivey A."/>
            <person name="Walsh S.V."/>
            <person name="Warren T."/>
            <person name="Whitehead S."/>
            <person name="Woodward J.R."/>
            <person name="Volckaert G."/>
            <person name="Aert R."/>
            <person name="Robben J."/>
            <person name="Grymonprez B."/>
            <person name="Weltjens I."/>
            <person name="Vanstreels E."/>
            <person name="Rieger M."/>
            <person name="Schaefer M."/>
            <person name="Mueller-Auer S."/>
            <person name="Gabel C."/>
            <person name="Fuchs M."/>
            <person name="Duesterhoeft A."/>
            <person name="Fritzc C."/>
            <person name="Holzer E."/>
            <person name="Moestl D."/>
            <person name="Hilbert H."/>
            <person name="Borzym K."/>
            <person name="Langer I."/>
            <person name="Beck A."/>
            <person name="Lehrach H."/>
            <person name="Reinhardt R."/>
            <person name="Pohl T.M."/>
            <person name="Eger P."/>
            <person name="Zimmermann W."/>
            <person name="Wedler H."/>
            <person name="Wambutt R."/>
            <person name="Purnelle B."/>
            <person name="Goffeau A."/>
            <person name="Cadieu E."/>
            <person name="Dreano S."/>
            <person name="Gloux S."/>
            <person name="Lelaure V."/>
            <person name="Mottier S."/>
            <person name="Galibert F."/>
            <person name="Aves S.J."/>
            <person name="Xiang Z."/>
            <person name="Hunt C."/>
            <person name="Moore K."/>
            <person name="Hurst S.M."/>
            <person name="Lucas M."/>
            <person name="Rochet M."/>
            <person name="Gaillardin C."/>
            <person name="Tallada V.A."/>
            <person name="Garzon A."/>
            <person name="Thode G."/>
            <person name="Daga R.R."/>
            <person name="Cruzado L."/>
            <person name="Jimenez J."/>
            <person name="Sanchez M."/>
            <person name="del Rey F."/>
            <person name="Benito J."/>
            <person name="Dominguez A."/>
            <person name="Revuelta J.L."/>
            <person name="Moreno S."/>
            <person name="Armstrong J."/>
            <person name="Forsburg S.L."/>
            <person name="Cerutti L."/>
            <person name="Lowe T."/>
            <person name="McCombie W.R."/>
            <person name="Paulsen I."/>
            <person name="Potashkin J."/>
            <person name="Shpakovski G.V."/>
            <person name="Ussery D."/>
            <person name="Barrell B.G."/>
            <person name="Nurse P."/>
        </authorList>
    </citation>
    <scope>NUCLEOTIDE SEQUENCE [LARGE SCALE GENOMIC DNA]</scope>
    <source>
        <strain>972 / ATCC 24843</strain>
    </source>
</reference>
<reference key="3">
    <citation type="journal article" date="2006" name="Nat. Biotechnol.">
        <title>ORFeome cloning and global analysis of protein localization in the fission yeast Schizosaccharomyces pombe.</title>
        <authorList>
            <person name="Matsuyama A."/>
            <person name="Arai R."/>
            <person name="Yashiroda Y."/>
            <person name="Shirai A."/>
            <person name="Kamata A."/>
            <person name="Sekido S."/>
            <person name="Kobayashi Y."/>
            <person name="Hashimoto A."/>
            <person name="Hamamoto M."/>
            <person name="Hiraoka Y."/>
            <person name="Horinouchi S."/>
            <person name="Yoshida M."/>
        </authorList>
    </citation>
    <scope>SUBCELLULAR LOCATION [LARGE SCALE ANALYSIS]</scope>
</reference>
<reference key="4">
    <citation type="journal article" date="2008" name="J. Proteome Res.">
        <title>Phosphoproteome analysis of fission yeast.</title>
        <authorList>
            <person name="Wilson-Grady J.T."/>
            <person name="Villen J."/>
            <person name="Gygi S.P."/>
        </authorList>
    </citation>
    <scope>PHOSPHORYLATION [LARGE SCALE ANALYSIS] AT TYR-108</scope>
    <scope>IDENTIFICATION BY MASS SPECTROMETRY</scope>
</reference>
<protein>
    <recommendedName>
        <fullName evidence="5">Large ribosomal subunit protein uL15B</fullName>
    </recommendedName>
    <alternativeName>
        <fullName>60S ribosomal protein L28-B</fullName>
    </alternativeName>
</protein>
<proteinExistence type="evidence at protein level"/>
<sequence>MPTHTSKTRKLRGHVSAGHGRIGKHRKHPGGRGKAGGLQHLRSHFDKYHPGYFGKVGMRRFHLMKNPLWRPTVNLDRLWTLVPNETREKYLGKNTEVAPVINVLQSGYGKVLGKGRLPDTPVIIQTRYVSRRAEEKIKQAGGVVELIA</sequence>
<organism>
    <name type="scientific">Schizosaccharomyces pombe (strain 972 / ATCC 24843)</name>
    <name type="common">Fission yeast</name>
    <dbReference type="NCBI Taxonomy" id="284812"/>
    <lineage>
        <taxon>Eukaryota</taxon>
        <taxon>Fungi</taxon>
        <taxon>Dikarya</taxon>
        <taxon>Ascomycota</taxon>
        <taxon>Taphrinomycotina</taxon>
        <taxon>Schizosaccharomycetes</taxon>
        <taxon>Schizosaccharomycetales</taxon>
        <taxon>Schizosaccharomycetaceae</taxon>
        <taxon>Schizosaccharomyces</taxon>
    </lineage>
</organism>
<dbReference type="EMBL" id="Z37501">
    <property type="protein sequence ID" value="CAA85731.1"/>
    <property type="molecule type" value="Genomic_DNA"/>
</dbReference>
<dbReference type="EMBL" id="CU329671">
    <property type="protein sequence ID" value="CAA22884.1"/>
    <property type="molecule type" value="Genomic_DNA"/>
</dbReference>
<dbReference type="PIR" id="S60001">
    <property type="entry name" value="S60001"/>
</dbReference>
<dbReference type="RefSeq" id="NP_596326.1">
    <property type="nucleotide sequence ID" value="NM_001022248.2"/>
</dbReference>
<dbReference type="PDB" id="9AXT">
    <property type="method" value="EM"/>
    <property type="resolution" value="2.40 A"/>
    <property type="chains" value="Bm=1-148"/>
</dbReference>
<dbReference type="PDB" id="9AXU">
    <property type="method" value="EM"/>
    <property type="resolution" value="1.94 A"/>
    <property type="chains" value="m=1-148"/>
</dbReference>
<dbReference type="PDB" id="9AXV">
    <property type="method" value="EM"/>
    <property type="resolution" value="2.40 A"/>
    <property type="chains" value="Bm=1-148"/>
</dbReference>
<dbReference type="PDBsum" id="9AXT"/>
<dbReference type="PDBsum" id="9AXU"/>
<dbReference type="PDBsum" id="9AXV"/>
<dbReference type="EMDB" id="EMD-43972"/>
<dbReference type="EMDB" id="EMD-43973"/>
<dbReference type="EMDB" id="EMD-43976"/>
<dbReference type="SMR" id="P57728"/>
<dbReference type="BioGRID" id="277645">
    <property type="interactions" value="37"/>
</dbReference>
<dbReference type="FunCoup" id="P57728">
    <property type="interactions" value="441"/>
</dbReference>
<dbReference type="STRING" id="284812.P57728"/>
<dbReference type="iPTMnet" id="P57728"/>
<dbReference type="PaxDb" id="4896-SPBC776.11.1"/>
<dbReference type="EnsemblFungi" id="SPBC776.11.1">
    <property type="protein sequence ID" value="SPBC776.11.1:pep"/>
    <property type="gene ID" value="SPBC776.11"/>
</dbReference>
<dbReference type="GeneID" id="2541130"/>
<dbReference type="KEGG" id="spo:2541130"/>
<dbReference type="PomBase" id="SPBC776.11">
    <property type="gene designation" value="rpl2801"/>
</dbReference>
<dbReference type="VEuPathDB" id="FungiDB:SPBC776.11"/>
<dbReference type="eggNOG" id="KOG1742">
    <property type="taxonomic scope" value="Eukaryota"/>
</dbReference>
<dbReference type="HOGENOM" id="CLU_109163_1_0_1"/>
<dbReference type="InParanoid" id="P57728"/>
<dbReference type="OMA" id="QRNHEWK"/>
<dbReference type="PhylomeDB" id="P57728"/>
<dbReference type="Reactome" id="R-SPO-156827">
    <property type="pathway name" value="L13a-mediated translational silencing of Ceruloplasmin expression"/>
</dbReference>
<dbReference type="Reactome" id="R-SPO-1799339">
    <property type="pathway name" value="SRP-dependent cotranslational protein targeting to membrane"/>
</dbReference>
<dbReference type="Reactome" id="R-SPO-72689">
    <property type="pathway name" value="Formation of a pool of free 40S subunits"/>
</dbReference>
<dbReference type="Reactome" id="R-SPO-72706">
    <property type="pathway name" value="GTP hydrolysis and joining of the 60S ribosomal subunit"/>
</dbReference>
<dbReference type="Reactome" id="R-SPO-975956">
    <property type="pathway name" value="Nonsense Mediated Decay (NMD) independent of the Exon Junction Complex (EJC)"/>
</dbReference>
<dbReference type="Reactome" id="R-SPO-975957">
    <property type="pathway name" value="Nonsense Mediated Decay (NMD) enhanced by the Exon Junction Complex (EJC)"/>
</dbReference>
<dbReference type="PRO" id="PR:P57728"/>
<dbReference type="Proteomes" id="UP000002485">
    <property type="component" value="Chromosome II"/>
</dbReference>
<dbReference type="GO" id="GO:0005829">
    <property type="term" value="C:cytosol"/>
    <property type="evidence" value="ECO:0007005"/>
    <property type="project" value="PomBase"/>
</dbReference>
<dbReference type="GO" id="GO:0022625">
    <property type="term" value="C:cytosolic large ribosomal subunit"/>
    <property type="evidence" value="ECO:0000269"/>
    <property type="project" value="PomBase"/>
</dbReference>
<dbReference type="GO" id="GO:0005730">
    <property type="term" value="C:nucleolus"/>
    <property type="evidence" value="ECO:0007005"/>
    <property type="project" value="PomBase"/>
</dbReference>
<dbReference type="GO" id="GO:0005634">
    <property type="term" value="C:nucleus"/>
    <property type="evidence" value="ECO:0007005"/>
    <property type="project" value="PomBase"/>
</dbReference>
<dbReference type="GO" id="GO:0030684">
    <property type="term" value="C:preribosome"/>
    <property type="evidence" value="ECO:0000314"/>
    <property type="project" value="PomBase"/>
</dbReference>
<dbReference type="GO" id="GO:0003735">
    <property type="term" value="F:structural constituent of ribosome"/>
    <property type="evidence" value="ECO:0000318"/>
    <property type="project" value="GO_Central"/>
</dbReference>
<dbReference type="GO" id="GO:0002181">
    <property type="term" value="P:cytoplasmic translation"/>
    <property type="evidence" value="ECO:0000266"/>
    <property type="project" value="PomBase"/>
</dbReference>
<dbReference type="FunFam" id="3.100.10.10:FF:000002">
    <property type="entry name" value="60S ribosomal protein L27a"/>
    <property type="match status" value="1"/>
</dbReference>
<dbReference type="Gene3D" id="3.100.10.10">
    <property type="match status" value="1"/>
</dbReference>
<dbReference type="HAMAP" id="MF_01341">
    <property type="entry name" value="Ribosomal_uL15"/>
    <property type="match status" value="1"/>
</dbReference>
<dbReference type="InterPro" id="IPR030878">
    <property type="entry name" value="Ribosomal_uL15"/>
</dbReference>
<dbReference type="InterPro" id="IPR021131">
    <property type="entry name" value="Ribosomal_uL15/eL18"/>
</dbReference>
<dbReference type="InterPro" id="IPR036227">
    <property type="entry name" value="Ribosomal_uL15/eL18_sf"/>
</dbReference>
<dbReference type="InterPro" id="IPR001196">
    <property type="entry name" value="Ribosomal_uL15_CS"/>
</dbReference>
<dbReference type="PANTHER" id="PTHR11721">
    <property type="entry name" value="60S RIBOSOMAL PROTEIN L27A"/>
    <property type="match status" value="1"/>
</dbReference>
<dbReference type="PANTHER" id="PTHR11721:SF3">
    <property type="entry name" value="LARGE RIBOSOMAL SUBUNIT PROTEIN UL15"/>
    <property type="match status" value="1"/>
</dbReference>
<dbReference type="Pfam" id="PF00828">
    <property type="entry name" value="Ribosomal_L27A"/>
    <property type="match status" value="1"/>
</dbReference>
<dbReference type="SUPFAM" id="SSF52080">
    <property type="entry name" value="Ribosomal proteins L15p and L18e"/>
    <property type="match status" value="1"/>
</dbReference>
<dbReference type="PROSITE" id="PS00475">
    <property type="entry name" value="RIBOSOMAL_L15"/>
    <property type="match status" value="1"/>
</dbReference>
<accession>P57728</accession>
<gene>
    <name type="primary">rpl2801</name>
    <name type="synonym">rpl28b</name>
    <name type="ORF">SPBC776.11</name>
</gene>
<keyword id="KW-0002">3D-structure</keyword>
<keyword id="KW-0963">Cytoplasm</keyword>
<keyword id="KW-0539">Nucleus</keyword>
<keyword id="KW-0597">Phosphoprotein</keyword>
<keyword id="KW-1185">Reference proteome</keyword>
<keyword id="KW-0687">Ribonucleoprotein</keyword>
<keyword id="KW-0689">Ribosomal protein</keyword>
<name>RL28B_SCHPO</name>
<evidence type="ECO:0000250" key="1">
    <source>
        <dbReference type="UniProtKB" id="P02406"/>
    </source>
</evidence>
<evidence type="ECO:0000256" key="2">
    <source>
        <dbReference type="SAM" id="MobiDB-lite"/>
    </source>
</evidence>
<evidence type="ECO:0000269" key="3">
    <source>
    </source>
</evidence>
<evidence type="ECO:0000269" key="4">
    <source>
    </source>
</evidence>
<evidence type="ECO:0000305" key="5"/>
<feature type="chain" id="PRO_0000104903" description="Large ribosomal subunit protein uL15B">
    <location>
        <begin position="1"/>
        <end position="148"/>
    </location>
</feature>
<feature type="region of interest" description="Disordered" evidence="2">
    <location>
        <begin position="1"/>
        <end position="38"/>
    </location>
</feature>
<feature type="compositionally biased region" description="Basic residues" evidence="2">
    <location>
        <begin position="1"/>
        <end position="13"/>
    </location>
</feature>
<feature type="compositionally biased region" description="Basic residues" evidence="2">
    <location>
        <begin position="21"/>
        <end position="31"/>
    </location>
</feature>
<feature type="modified residue" description="Phosphotyrosine" evidence="4">
    <location>
        <position position="108"/>
    </location>
</feature>